<comment type="function">
    <text evidence="1">Dual-function protein that regulates the transcription of class 2 flagellar operons and that also acts as an export chaperone for the filament-capping protein FliD. As a transcriptional regulator, acts as an anti-FlhDC factor; it directly binds FlhC, thus inhibiting the binding of the FlhC/FlhD complex to class 2 promoters, resulting in decreased expression of class 2 flagellar operons. As a chaperone, effects FliD transition to the membrane by preventing its premature polymerization, and by directing it to the export apparatus.</text>
</comment>
<comment type="subunit">
    <text evidence="1">Homodimer. Interacts with FliD and FlhC.</text>
</comment>
<comment type="subcellular location">
    <subcellularLocation>
        <location evidence="1">Cytoplasm</location>
        <location evidence="1">Cytosol</location>
    </subcellularLocation>
</comment>
<comment type="similarity">
    <text evidence="1">Belongs to the FliT family.</text>
</comment>
<evidence type="ECO:0000255" key="1">
    <source>
        <dbReference type="HAMAP-Rule" id="MF_01180"/>
    </source>
</evidence>
<name>FLIT_SALSV</name>
<sequence length="122" mass="13705">MTSTVEFINRWQRIALLSQSLLELAQRGEWDLLLQQEVSYLQSIETVMEKQTPPGITRSIQDMVAGYIKQTLDNEQLLKGLLQQRLDELSSLIGQSTRQKSLNNAYGRLSGMLLVPDAPGAS</sequence>
<protein>
    <recommendedName>
        <fullName evidence="1">Flagellar protein FliT</fullName>
    </recommendedName>
</protein>
<feature type="chain" id="PRO_1000138187" description="Flagellar protein FliT">
    <location>
        <begin position="1"/>
        <end position="122"/>
    </location>
</feature>
<feature type="region of interest" description="Required for homodimerization" evidence="1">
    <location>
        <begin position="1"/>
        <end position="50"/>
    </location>
</feature>
<feature type="region of interest" description="FliD binding" evidence="1">
    <location>
        <begin position="60"/>
        <end position="98"/>
    </location>
</feature>
<gene>
    <name evidence="1" type="primary">fliT</name>
    <name type="ordered locus">SeSA_A2119</name>
</gene>
<organism>
    <name type="scientific">Salmonella schwarzengrund (strain CVM19633)</name>
    <dbReference type="NCBI Taxonomy" id="439843"/>
    <lineage>
        <taxon>Bacteria</taxon>
        <taxon>Pseudomonadati</taxon>
        <taxon>Pseudomonadota</taxon>
        <taxon>Gammaproteobacteria</taxon>
        <taxon>Enterobacterales</taxon>
        <taxon>Enterobacteriaceae</taxon>
        <taxon>Salmonella</taxon>
    </lineage>
</organism>
<proteinExistence type="inferred from homology"/>
<reference key="1">
    <citation type="journal article" date="2011" name="J. Bacteriol.">
        <title>Comparative genomics of 28 Salmonella enterica isolates: evidence for CRISPR-mediated adaptive sublineage evolution.</title>
        <authorList>
            <person name="Fricke W.F."/>
            <person name="Mammel M.K."/>
            <person name="McDermott P.F."/>
            <person name="Tartera C."/>
            <person name="White D.G."/>
            <person name="Leclerc J.E."/>
            <person name="Ravel J."/>
            <person name="Cebula T.A."/>
        </authorList>
    </citation>
    <scope>NUCLEOTIDE SEQUENCE [LARGE SCALE GENOMIC DNA]</scope>
    <source>
        <strain>CVM19633</strain>
    </source>
</reference>
<keyword id="KW-1005">Bacterial flagellum biogenesis</keyword>
<keyword id="KW-0143">Chaperone</keyword>
<keyword id="KW-0963">Cytoplasm</keyword>
<keyword id="KW-0678">Repressor</keyword>
<keyword id="KW-0804">Transcription</keyword>
<keyword id="KW-0805">Transcription regulation</keyword>
<accession>B4TZJ1</accession>
<dbReference type="EMBL" id="CP001127">
    <property type="protein sequence ID" value="ACF89436.1"/>
    <property type="molecule type" value="Genomic_DNA"/>
</dbReference>
<dbReference type="RefSeq" id="WP_000204899.1">
    <property type="nucleotide sequence ID" value="NC_011094.1"/>
</dbReference>
<dbReference type="SMR" id="B4TZJ1"/>
<dbReference type="KEGG" id="sew:SeSA_A2119"/>
<dbReference type="HOGENOM" id="CLU_155793_1_0_6"/>
<dbReference type="Proteomes" id="UP000001865">
    <property type="component" value="Chromosome"/>
</dbReference>
<dbReference type="GO" id="GO:0005829">
    <property type="term" value="C:cytosol"/>
    <property type="evidence" value="ECO:0007669"/>
    <property type="project" value="UniProtKB-SubCell"/>
</dbReference>
<dbReference type="GO" id="GO:0044781">
    <property type="term" value="P:bacterial-type flagellum organization"/>
    <property type="evidence" value="ECO:0007669"/>
    <property type="project" value="UniProtKB-KW"/>
</dbReference>
<dbReference type="GO" id="GO:1902209">
    <property type="term" value="P:negative regulation of bacterial-type flagellum assembly"/>
    <property type="evidence" value="ECO:0007669"/>
    <property type="project" value="UniProtKB-UniRule"/>
</dbReference>
<dbReference type="GO" id="GO:0006457">
    <property type="term" value="P:protein folding"/>
    <property type="evidence" value="ECO:0007669"/>
    <property type="project" value="UniProtKB-UniRule"/>
</dbReference>
<dbReference type="FunFam" id="1.20.58.380:FF:000002">
    <property type="entry name" value="Flagellar protein FliT"/>
    <property type="match status" value="1"/>
</dbReference>
<dbReference type="Gene3D" id="1.20.58.380">
    <property type="entry name" value="Flagellar protein flit"/>
    <property type="match status" value="1"/>
</dbReference>
<dbReference type="HAMAP" id="MF_01180">
    <property type="entry name" value="FliT"/>
    <property type="match status" value="1"/>
</dbReference>
<dbReference type="InterPro" id="IPR008622">
    <property type="entry name" value="FliT"/>
</dbReference>
<dbReference type="NCBIfam" id="NF007836">
    <property type="entry name" value="PRK10548.1"/>
    <property type="match status" value="1"/>
</dbReference>
<dbReference type="Pfam" id="PF05400">
    <property type="entry name" value="FliT"/>
    <property type="match status" value="1"/>
</dbReference>